<dbReference type="EMBL" id="AB602051">
    <property type="protein sequence ID" value="BAK08581.1"/>
    <property type="molecule type" value="mRNA"/>
</dbReference>
<dbReference type="SMR" id="F1T149"/>
<dbReference type="GO" id="GO:0005576">
    <property type="term" value="C:extracellular region"/>
    <property type="evidence" value="ECO:0000314"/>
    <property type="project" value="UniProtKB"/>
</dbReference>
<dbReference type="GO" id="GO:0050832">
    <property type="term" value="P:defense response to fungus"/>
    <property type="evidence" value="ECO:0000314"/>
    <property type="project" value="UniProtKB"/>
</dbReference>
<dbReference type="GO" id="GO:0050829">
    <property type="term" value="P:defense response to Gram-negative bacterium"/>
    <property type="evidence" value="ECO:0000314"/>
    <property type="project" value="UniProtKB"/>
</dbReference>
<dbReference type="GO" id="GO:0050830">
    <property type="term" value="P:defense response to Gram-positive bacterium"/>
    <property type="evidence" value="ECO:0000314"/>
    <property type="project" value="UniProtKB"/>
</dbReference>
<dbReference type="InterPro" id="IPR004275">
    <property type="entry name" value="Frog_antimicrobial_propeptide"/>
</dbReference>
<dbReference type="Pfam" id="PF03032">
    <property type="entry name" value="FSAP_sig_propep"/>
    <property type="match status" value="1"/>
</dbReference>
<keyword id="KW-0878">Amphibian defense peptide</keyword>
<keyword id="KW-0044">Antibiotic</keyword>
<keyword id="KW-0929">Antimicrobial</keyword>
<keyword id="KW-0165">Cleavage on pair of basic residues</keyword>
<keyword id="KW-0903">Direct protein sequencing</keyword>
<keyword id="KW-1015">Disulfide bond</keyword>
<keyword id="KW-0964">Secreted</keyword>
<keyword id="KW-0732">Signal</keyword>
<accession>F1T149</accession>
<reference evidence="7" key="1">
    <citation type="journal article" date="2011" name="Peptides">
        <title>Identification and characterization of antimicrobial peptides from the skin of the endangered frog Odorrana ishikawae.</title>
        <authorList>
            <person name="Iwakoshi-Ukena E."/>
            <person name="Ukena K."/>
            <person name="Okimoto A."/>
            <person name="Soga M."/>
            <person name="Okada G."/>
            <person name="Sano N."/>
            <person name="Fujii T."/>
            <person name="Sugawara Y."/>
            <person name="Sumida M."/>
        </authorList>
    </citation>
    <scope>NUCLEOTIDE SEQUENCE [MRNA]</scope>
    <scope>PROTEIN SEQUENCE OF 39-84</scope>
    <scope>FUNCTION</scope>
    <scope>SYNTHESIS</scope>
    <scope>MASS SPECTROMETRY</scope>
    <source>
        <tissue evidence="4">Skin</tissue>
    </source>
</reference>
<feature type="signal peptide" evidence="2">
    <location>
        <begin position="1"/>
        <end position="22"/>
    </location>
</feature>
<feature type="propeptide" id="PRO_0000439607" description="Removed in mature form" evidence="6">
    <location>
        <begin position="23"/>
        <end position="36"/>
    </location>
</feature>
<feature type="peptide" id="PRO_0000439608" description="Esculentin-1SIa" evidence="3">
    <location>
        <begin position="39"/>
        <end position="84"/>
    </location>
</feature>
<feature type="disulfide bond" evidence="1">
    <location>
        <begin position="78"/>
        <end position="84"/>
    </location>
</feature>
<name>ES1IA_ODOIS</name>
<proteinExistence type="evidence at protein level"/>
<comment type="function">
    <text evidence="3">Has antimicrobial activity against Gram-negative bacterium E.coli ATCC 8739 (MIC=6.3 ug), against Gram positive bacteria S.aureus ATCC 6538 (MIC=3.1 ug), methicillin-resistant S.aureus ATCC 43300 (MIC=25 ug) and B.subtilis ATCC 6633 (MIC=25 ug). Has no activity against fungus C.albicans ATCC 90028.</text>
</comment>
<comment type="subcellular location">
    <subcellularLocation>
        <location evidence="6">Secreted</location>
    </subcellularLocation>
</comment>
<comment type="tissue specificity">
    <text evidence="6">Expressed by the skin glands.</text>
</comment>
<comment type="mass spectrometry" mass="4805.0" method="MALDI" evidence="3"/>
<comment type="similarity">
    <text evidence="5">Belongs to the frog skin active peptide (FSAP) family. Esculentin subfamily.</text>
</comment>
<comment type="online information" name="The antimicrobial peptide database">
    <link uri="https://wangapd3.com/database/query_output.php?ID=01703"/>
</comment>
<organism evidence="4">
    <name type="scientific">Odorrana ishikawae</name>
    <name type="common">Ishikawa's frog</name>
    <name type="synonym">Rana ishikawae</name>
    <dbReference type="NCBI Taxonomy" id="310659"/>
    <lineage>
        <taxon>Eukaryota</taxon>
        <taxon>Metazoa</taxon>
        <taxon>Chordata</taxon>
        <taxon>Craniata</taxon>
        <taxon>Vertebrata</taxon>
        <taxon>Euteleostomi</taxon>
        <taxon>Amphibia</taxon>
        <taxon>Batrachia</taxon>
        <taxon>Anura</taxon>
        <taxon>Neobatrachia</taxon>
        <taxon>Ranoidea</taxon>
        <taxon>Ranidae</taxon>
        <taxon>Odorrana</taxon>
    </lineage>
</organism>
<sequence length="84" mass="9062">MFTLKKPLLLIVLLGIISLSLCEQERAADEDEGSEIKRGIFSKFAGKGIKNLLVKGVKNIGKEVGMDVIRTGIDIAGCKIKGEC</sequence>
<protein>
    <recommendedName>
        <fullName evidence="4">Esculentin-1SIa</fullName>
    </recommendedName>
</protein>
<evidence type="ECO:0000250" key="1">
    <source>
        <dbReference type="UniProtKB" id="B3A0M9"/>
    </source>
</evidence>
<evidence type="ECO:0000255" key="2"/>
<evidence type="ECO:0000269" key="3">
    <source>
    </source>
</evidence>
<evidence type="ECO:0000303" key="4">
    <source>
    </source>
</evidence>
<evidence type="ECO:0000305" key="5"/>
<evidence type="ECO:0000305" key="6">
    <source>
    </source>
</evidence>
<evidence type="ECO:0000312" key="7">
    <source>
        <dbReference type="EMBL" id="BAK08581.1"/>
    </source>
</evidence>